<feature type="chain" id="PRO_0000287526" description="Methionine adenosyltransferase 2 subunit beta">
    <location>
        <begin position="1"/>
        <end position="334"/>
    </location>
</feature>
<feature type="region of interest" description="Required for interaction with MAT2A" evidence="1">
    <location>
        <begin position="319"/>
        <end position="334"/>
    </location>
</feature>
<feature type="binding site" evidence="1">
    <location>
        <begin position="37"/>
        <end position="40"/>
    </location>
    <ligand>
        <name>NADP(+)</name>
        <dbReference type="ChEBI" id="CHEBI:58349"/>
    </ligand>
</feature>
<feature type="binding site" evidence="1">
    <location>
        <begin position="60"/>
        <end position="62"/>
    </location>
    <ligand>
        <name>NADP(+)</name>
        <dbReference type="ChEBI" id="CHEBI:58349"/>
    </ligand>
</feature>
<feature type="binding site" evidence="1">
    <location>
        <begin position="71"/>
        <end position="72"/>
    </location>
    <ligand>
        <name>NADP(+)</name>
        <dbReference type="ChEBI" id="CHEBI:58349"/>
    </ligand>
</feature>
<feature type="binding site" evidence="1">
    <location>
        <position position="93"/>
    </location>
    <ligand>
        <name>NADP(+)</name>
        <dbReference type="ChEBI" id="CHEBI:58349"/>
    </ligand>
</feature>
<feature type="binding site" evidence="1">
    <location>
        <position position="97"/>
    </location>
    <ligand>
        <name>NADP(+)</name>
        <dbReference type="ChEBI" id="CHEBI:58349"/>
    </ligand>
</feature>
<feature type="binding site" evidence="1">
    <location>
        <position position="159"/>
    </location>
    <ligand>
        <name>NADP(+)</name>
        <dbReference type="ChEBI" id="CHEBI:58349"/>
    </ligand>
</feature>
<feature type="binding site" evidence="1">
    <location>
        <position position="185"/>
    </location>
    <ligand>
        <name>NADP(+)</name>
        <dbReference type="ChEBI" id="CHEBI:58349"/>
    </ligand>
</feature>
<feature type="sequence conflict" description="In Ref. 1; CAL49345." evidence="2" ref="1">
    <original>S</original>
    <variation>N</variation>
    <location>
        <position position="52"/>
    </location>
</feature>
<feature type="sequence conflict" description="In Ref. 1; CAL49345." evidence="2" ref="1">
    <original>V</original>
    <variation>I</variation>
    <location>
        <position position="152"/>
    </location>
</feature>
<proteinExistence type="evidence at transcript level"/>
<gene>
    <name type="primary">mat2b</name>
    <name type="ORF">TEgg038m14.1</name>
</gene>
<keyword id="KW-0521">NADP</keyword>
<keyword id="KW-0554">One-carbon metabolism</keyword>
<keyword id="KW-1185">Reference proteome</keyword>
<protein>
    <recommendedName>
        <fullName>Methionine adenosyltransferase 2 subunit beta</fullName>
    </recommendedName>
    <alternativeName>
        <fullName>Methionine adenosyltransferase II beta</fullName>
        <shortName>MAT II beta</shortName>
    </alternativeName>
</protein>
<dbReference type="EMBL" id="CR855516">
    <property type="protein sequence ID" value="CAL49345.1"/>
    <property type="molecule type" value="mRNA"/>
</dbReference>
<dbReference type="EMBL" id="BC093462">
    <property type="protein sequence ID" value="AAH93462.1"/>
    <property type="molecule type" value="mRNA"/>
</dbReference>
<dbReference type="RefSeq" id="NP_001016828.2">
    <property type="nucleotide sequence ID" value="NM_001016828.3"/>
</dbReference>
<dbReference type="SMR" id="Q566L8"/>
<dbReference type="FunCoup" id="Q566L8">
    <property type="interactions" value="1260"/>
</dbReference>
<dbReference type="STRING" id="8364.ENSXETP00000028362"/>
<dbReference type="PaxDb" id="8364-ENSXETP00000032976"/>
<dbReference type="DNASU" id="549582"/>
<dbReference type="GeneID" id="549582"/>
<dbReference type="KEGG" id="xtr:549582"/>
<dbReference type="AGR" id="Xenbase:XB-GENE-972023"/>
<dbReference type="CTD" id="27430"/>
<dbReference type="Xenbase" id="XB-GENE-972023">
    <property type="gene designation" value="mat2b"/>
</dbReference>
<dbReference type="eggNOG" id="KOG1430">
    <property type="taxonomic scope" value="Eukaryota"/>
</dbReference>
<dbReference type="InParanoid" id="Q566L8"/>
<dbReference type="OMA" id="IRTAWVY"/>
<dbReference type="OrthoDB" id="6235964at2759"/>
<dbReference type="Reactome" id="R-XTR-156581">
    <property type="pathway name" value="Methylation"/>
</dbReference>
<dbReference type="Reactome" id="R-XTR-5689880">
    <property type="pathway name" value="Ub-specific processing proteases"/>
</dbReference>
<dbReference type="UniPathway" id="UPA00315">
    <property type="reaction ID" value="UER00080"/>
</dbReference>
<dbReference type="Proteomes" id="UP000008143">
    <property type="component" value="Chromosome 3"/>
</dbReference>
<dbReference type="Bgee" id="ENSXETG00000015071">
    <property type="expression patterns" value="Expressed in egg cell and 12 other cell types or tissues"/>
</dbReference>
<dbReference type="GO" id="GO:0048269">
    <property type="term" value="C:methionine adenosyltransferase complex"/>
    <property type="evidence" value="ECO:0000250"/>
    <property type="project" value="UniProtKB"/>
</dbReference>
<dbReference type="GO" id="GO:0048270">
    <property type="term" value="F:methionine adenosyltransferase regulator activity"/>
    <property type="evidence" value="ECO:0000250"/>
    <property type="project" value="UniProtKB"/>
</dbReference>
<dbReference type="GO" id="GO:0006730">
    <property type="term" value="P:one-carbon metabolic process"/>
    <property type="evidence" value="ECO:0007669"/>
    <property type="project" value="UniProtKB-KW"/>
</dbReference>
<dbReference type="GO" id="GO:0006556">
    <property type="term" value="P:S-adenosylmethionine biosynthetic process"/>
    <property type="evidence" value="ECO:0000250"/>
    <property type="project" value="UniProtKB"/>
</dbReference>
<dbReference type="CDD" id="cd05254">
    <property type="entry name" value="dTDP_HR_like_SDR_e"/>
    <property type="match status" value="1"/>
</dbReference>
<dbReference type="FunFam" id="3.40.50.720:FF:000133">
    <property type="entry name" value="Methionine adenosyltransferase 2 subunit beta"/>
    <property type="match status" value="1"/>
</dbReference>
<dbReference type="Gene3D" id="3.40.50.720">
    <property type="entry name" value="NAD(P)-binding Rossmann-like Domain"/>
    <property type="match status" value="1"/>
</dbReference>
<dbReference type="InterPro" id="IPR005913">
    <property type="entry name" value="dTDP_dehydrorham_reduct"/>
</dbReference>
<dbReference type="InterPro" id="IPR036291">
    <property type="entry name" value="NAD(P)-bd_dom_sf"/>
</dbReference>
<dbReference type="InterPro" id="IPR029903">
    <property type="entry name" value="RmlD-like-bd"/>
</dbReference>
<dbReference type="PANTHER" id="PTHR10491">
    <property type="entry name" value="DTDP-4-DEHYDRORHAMNOSE REDUCTASE"/>
    <property type="match status" value="1"/>
</dbReference>
<dbReference type="PANTHER" id="PTHR10491:SF4">
    <property type="entry name" value="METHIONINE ADENOSYLTRANSFERASE 2 SUBUNIT BETA"/>
    <property type="match status" value="1"/>
</dbReference>
<dbReference type="Pfam" id="PF04321">
    <property type="entry name" value="RmlD_sub_bind"/>
    <property type="match status" value="1"/>
</dbReference>
<dbReference type="SUPFAM" id="SSF51735">
    <property type="entry name" value="NAD(P)-binding Rossmann-fold domains"/>
    <property type="match status" value="1"/>
</dbReference>
<accession>Q566L8</accession>
<accession>Q07G14</accession>
<sequence length="334" mass="37804">MEGRHKEYRIRFSPGWVEVVQDDVTIPGRRALITGATGLLGRAVYKEFKENSWHVLGCGYSRARPRFEYLNLLDAAAVKALIQDFKPHVIIHCAAERRPDIVESQPEFASLLNVVASENLAKEAAGVGAFLIYVSSDYVFDGTSPPYREDSVPNPLNLYGKTKLEGERAVLHNNEGAAVLRVPVLYGDVEKLSESAVTILFDKVQFSNKSANMDHWQQRFPTYVKDVASVCLQLTERRLQDPSIKGIYHWSGNEQMTKYEMTCAMADAFNLPSSHLRPITDEPVGATPRPWNPQLDCSKLEKIGIGQRTPFRVGIRESLWPFLVDKRWRQTVFH</sequence>
<comment type="function">
    <text evidence="1">Regulatory subunit of S-adenosylmethionine synthetase 2, an enzyme that catalyzes the formation of S-adenosylmethionine from methionine and ATP. Regulates MAT2A catalytic activity by changing its kinetic properties, increasing its affinity for L-methionine. Can bind NADP (in vitro).</text>
</comment>
<comment type="pathway">
    <text evidence="1">Amino-acid biosynthesis; S-adenosyl-L-methionine biosynthesis; S-adenosyl-L-methionine from L-methionine: step 1/1.</text>
</comment>
<comment type="subunit">
    <text evidence="1">Heterotrimer; composed of a catalytic mat2a homodimer that binds one regulatory mat2b chain. Heterohexamer; composed of a central, catalytic mat2a homotetramer flanked on either side by a regulatory mat2b chain. NADP binding increases the affinity for mat2a.</text>
</comment>
<comment type="similarity">
    <text evidence="2">Belongs to the dTDP-4-dehydrorhamnose reductase family. MAT2B subfamily.</text>
</comment>
<organism>
    <name type="scientific">Xenopus tropicalis</name>
    <name type="common">Western clawed frog</name>
    <name type="synonym">Silurana tropicalis</name>
    <dbReference type="NCBI Taxonomy" id="8364"/>
    <lineage>
        <taxon>Eukaryota</taxon>
        <taxon>Metazoa</taxon>
        <taxon>Chordata</taxon>
        <taxon>Craniata</taxon>
        <taxon>Vertebrata</taxon>
        <taxon>Euteleostomi</taxon>
        <taxon>Amphibia</taxon>
        <taxon>Batrachia</taxon>
        <taxon>Anura</taxon>
        <taxon>Pipoidea</taxon>
        <taxon>Pipidae</taxon>
        <taxon>Xenopodinae</taxon>
        <taxon>Xenopus</taxon>
        <taxon>Silurana</taxon>
    </lineage>
</organism>
<name>MAT2B_XENTR</name>
<reference key="1">
    <citation type="submission" date="2006-10" db="EMBL/GenBank/DDBJ databases">
        <authorList>
            <consortium name="Sanger Xenopus tropicalis EST/cDNA project"/>
        </authorList>
    </citation>
    <scope>NUCLEOTIDE SEQUENCE [LARGE SCALE MRNA]</scope>
    <source>
        <tissue>Egg</tissue>
    </source>
</reference>
<reference key="2">
    <citation type="submission" date="2005-04" db="EMBL/GenBank/DDBJ databases">
        <authorList>
            <consortium name="NIH - Xenopus Gene Collection (XGC) project"/>
        </authorList>
    </citation>
    <scope>NUCLEOTIDE SEQUENCE [LARGE SCALE MRNA]</scope>
    <source>
        <tissue>Embryo</tissue>
    </source>
</reference>
<evidence type="ECO:0000250" key="1">
    <source>
        <dbReference type="UniProtKB" id="Q9NZL9"/>
    </source>
</evidence>
<evidence type="ECO:0000305" key="2"/>